<organism>
    <name type="scientific">Nitratidesulfovibrio vulgaris (strain DP4)</name>
    <name type="common">Desulfovibrio vulgaris</name>
    <dbReference type="NCBI Taxonomy" id="391774"/>
    <lineage>
        <taxon>Bacteria</taxon>
        <taxon>Pseudomonadati</taxon>
        <taxon>Thermodesulfobacteriota</taxon>
        <taxon>Desulfovibrionia</taxon>
        <taxon>Desulfovibrionales</taxon>
        <taxon>Desulfovibrionaceae</taxon>
        <taxon>Nitratidesulfovibrio</taxon>
    </lineage>
</organism>
<feature type="chain" id="PRO_0000332816" description="Cysteine--tRNA ligase">
    <location>
        <begin position="1"/>
        <end position="485"/>
    </location>
</feature>
<feature type="short sequence motif" description="'HIGH' region">
    <location>
        <begin position="29"/>
        <end position="39"/>
    </location>
</feature>
<feature type="short sequence motif" description="'KMSKS' region">
    <location>
        <begin position="265"/>
        <end position="269"/>
    </location>
</feature>
<feature type="binding site" evidence="1">
    <location>
        <position position="27"/>
    </location>
    <ligand>
        <name>Zn(2+)</name>
        <dbReference type="ChEBI" id="CHEBI:29105"/>
    </ligand>
</feature>
<feature type="binding site" evidence="1">
    <location>
        <position position="208"/>
    </location>
    <ligand>
        <name>Zn(2+)</name>
        <dbReference type="ChEBI" id="CHEBI:29105"/>
    </ligand>
</feature>
<feature type="binding site" evidence="1">
    <location>
        <position position="233"/>
    </location>
    <ligand>
        <name>Zn(2+)</name>
        <dbReference type="ChEBI" id="CHEBI:29105"/>
    </ligand>
</feature>
<feature type="binding site" evidence="1">
    <location>
        <position position="237"/>
    </location>
    <ligand>
        <name>Zn(2+)</name>
        <dbReference type="ChEBI" id="CHEBI:29105"/>
    </ligand>
</feature>
<feature type="binding site" evidence="1">
    <location>
        <position position="268"/>
    </location>
    <ligand>
        <name>ATP</name>
        <dbReference type="ChEBI" id="CHEBI:30616"/>
    </ligand>
</feature>
<gene>
    <name evidence="1" type="primary">cysS</name>
    <name type="ordered locus">Dvul_1554</name>
</gene>
<evidence type="ECO:0000255" key="1">
    <source>
        <dbReference type="HAMAP-Rule" id="MF_00041"/>
    </source>
</evidence>
<protein>
    <recommendedName>
        <fullName evidence="1">Cysteine--tRNA ligase</fullName>
        <ecNumber evidence="1">6.1.1.16</ecNumber>
    </recommendedName>
    <alternativeName>
        <fullName evidence="1">Cysteinyl-tRNA synthetase</fullName>
        <shortName evidence="1">CysRS</shortName>
    </alternativeName>
</protein>
<accession>A1VDQ5</accession>
<reference key="1">
    <citation type="journal article" date="2009" name="Environ. Microbiol.">
        <title>Contribution of mobile genetic elements to Desulfovibrio vulgaris genome plasticity.</title>
        <authorList>
            <person name="Walker C.B."/>
            <person name="Stolyar S."/>
            <person name="Chivian D."/>
            <person name="Pinel N."/>
            <person name="Gabster J.A."/>
            <person name="Dehal P.S."/>
            <person name="He Z."/>
            <person name="Yang Z.K."/>
            <person name="Yen H.C."/>
            <person name="Zhou J."/>
            <person name="Wall J.D."/>
            <person name="Hazen T.C."/>
            <person name="Arkin A.P."/>
            <person name="Stahl D.A."/>
        </authorList>
    </citation>
    <scope>NUCLEOTIDE SEQUENCE [LARGE SCALE GENOMIC DNA]</scope>
    <source>
        <strain>DP4</strain>
    </source>
</reference>
<sequence length="485" mass="54817">MQIYNSLSRRKELFTPAVPGKVNMYVCGITAYDLCHIGHARSAVVFDVLVRYLRHTGLDVTFARNFTDVDDKIIKRANEEGLTSQQVAEKYIDTFYEDMDRLNVLRADIEPKATGHILEMIALCEKLIAKGKAYATPSGDVYFRVRSFPEYGKLSGRDIDDMRSGARVAPGEEKEDPLDFALWKSAKPGEPSWTSPWGEGRPGWHIECSAMSEKHMPLPLDIHGGGQDLIFPHHENEIAQTEAALDKPFVRYWMHNGFVQVDAEKMSKSLGNFKTIRDILEGYLPEVLRFFLLTKHYRSPIDFTFDSMDEAEKSLKRIYEALSLARTERGRSKWSATPLPADVTAEFDTLDRAFDEALEDDLNTAAALGHVFGTIRLVNRLLEDKNLRKSAETLALLERLDGLVAKWMKVLGVFGREPEAFLSDLKECRIRRKGIDTTKVDALLEERKSVRAAKDFARADAIRDELAALGIEVRDTPSGAVWDVL</sequence>
<dbReference type="EC" id="6.1.1.16" evidence="1"/>
<dbReference type="EMBL" id="CP000527">
    <property type="protein sequence ID" value="ABM28571.1"/>
    <property type="molecule type" value="Genomic_DNA"/>
</dbReference>
<dbReference type="RefSeq" id="WP_011792341.1">
    <property type="nucleotide sequence ID" value="NC_008751.1"/>
</dbReference>
<dbReference type="SMR" id="A1VDQ5"/>
<dbReference type="KEGG" id="dvl:Dvul_1554"/>
<dbReference type="HOGENOM" id="CLU_013528_0_1_7"/>
<dbReference type="Proteomes" id="UP000009173">
    <property type="component" value="Chromosome"/>
</dbReference>
<dbReference type="GO" id="GO:0005829">
    <property type="term" value="C:cytosol"/>
    <property type="evidence" value="ECO:0007669"/>
    <property type="project" value="TreeGrafter"/>
</dbReference>
<dbReference type="GO" id="GO:0005524">
    <property type="term" value="F:ATP binding"/>
    <property type="evidence" value="ECO:0007669"/>
    <property type="project" value="UniProtKB-UniRule"/>
</dbReference>
<dbReference type="GO" id="GO:0004817">
    <property type="term" value="F:cysteine-tRNA ligase activity"/>
    <property type="evidence" value="ECO:0007669"/>
    <property type="project" value="UniProtKB-UniRule"/>
</dbReference>
<dbReference type="GO" id="GO:0008270">
    <property type="term" value="F:zinc ion binding"/>
    <property type="evidence" value="ECO:0007669"/>
    <property type="project" value="UniProtKB-UniRule"/>
</dbReference>
<dbReference type="GO" id="GO:0006423">
    <property type="term" value="P:cysteinyl-tRNA aminoacylation"/>
    <property type="evidence" value="ECO:0007669"/>
    <property type="project" value="UniProtKB-UniRule"/>
</dbReference>
<dbReference type="CDD" id="cd00672">
    <property type="entry name" value="CysRS_core"/>
    <property type="match status" value="1"/>
</dbReference>
<dbReference type="FunFam" id="3.40.50.620:FF:000009">
    <property type="entry name" value="Cysteine--tRNA ligase"/>
    <property type="match status" value="1"/>
</dbReference>
<dbReference type="Gene3D" id="1.20.120.1910">
    <property type="entry name" value="Cysteine-tRNA ligase, C-terminal anti-codon recognition domain"/>
    <property type="match status" value="1"/>
</dbReference>
<dbReference type="Gene3D" id="3.40.50.620">
    <property type="entry name" value="HUPs"/>
    <property type="match status" value="1"/>
</dbReference>
<dbReference type="HAMAP" id="MF_00041">
    <property type="entry name" value="Cys_tRNA_synth"/>
    <property type="match status" value="1"/>
</dbReference>
<dbReference type="InterPro" id="IPR015803">
    <property type="entry name" value="Cys-tRNA-ligase"/>
</dbReference>
<dbReference type="InterPro" id="IPR015273">
    <property type="entry name" value="Cys-tRNA-synt_Ia_DALR"/>
</dbReference>
<dbReference type="InterPro" id="IPR024909">
    <property type="entry name" value="Cys-tRNA/MSH_ligase"/>
</dbReference>
<dbReference type="InterPro" id="IPR056411">
    <property type="entry name" value="CysS_C"/>
</dbReference>
<dbReference type="InterPro" id="IPR014729">
    <property type="entry name" value="Rossmann-like_a/b/a_fold"/>
</dbReference>
<dbReference type="InterPro" id="IPR032678">
    <property type="entry name" value="tRNA-synt_1_cat_dom"/>
</dbReference>
<dbReference type="InterPro" id="IPR009080">
    <property type="entry name" value="tRNAsynth_Ia_anticodon-bd"/>
</dbReference>
<dbReference type="NCBIfam" id="TIGR00435">
    <property type="entry name" value="cysS"/>
    <property type="match status" value="1"/>
</dbReference>
<dbReference type="PANTHER" id="PTHR10890:SF3">
    <property type="entry name" value="CYSTEINE--TRNA LIGASE, CYTOPLASMIC"/>
    <property type="match status" value="1"/>
</dbReference>
<dbReference type="PANTHER" id="PTHR10890">
    <property type="entry name" value="CYSTEINYL-TRNA SYNTHETASE"/>
    <property type="match status" value="1"/>
</dbReference>
<dbReference type="Pfam" id="PF23493">
    <property type="entry name" value="CysS_C"/>
    <property type="match status" value="1"/>
</dbReference>
<dbReference type="Pfam" id="PF09190">
    <property type="entry name" value="DALR_2"/>
    <property type="match status" value="1"/>
</dbReference>
<dbReference type="Pfam" id="PF01406">
    <property type="entry name" value="tRNA-synt_1e"/>
    <property type="match status" value="1"/>
</dbReference>
<dbReference type="PRINTS" id="PR00983">
    <property type="entry name" value="TRNASYNTHCYS"/>
</dbReference>
<dbReference type="SMART" id="SM00840">
    <property type="entry name" value="DALR_2"/>
    <property type="match status" value="1"/>
</dbReference>
<dbReference type="SUPFAM" id="SSF47323">
    <property type="entry name" value="Anticodon-binding domain of a subclass of class I aminoacyl-tRNA synthetases"/>
    <property type="match status" value="1"/>
</dbReference>
<dbReference type="SUPFAM" id="SSF52374">
    <property type="entry name" value="Nucleotidylyl transferase"/>
    <property type="match status" value="1"/>
</dbReference>
<keyword id="KW-0030">Aminoacyl-tRNA synthetase</keyword>
<keyword id="KW-0067">ATP-binding</keyword>
<keyword id="KW-0963">Cytoplasm</keyword>
<keyword id="KW-0436">Ligase</keyword>
<keyword id="KW-0479">Metal-binding</keyword>
<keyword id="KW-0547">Nucleotide-binding</keyword>
<keyword id="KW-0648">Protein biosynthesis</keyword>
<keyword id="KW-0862">Zinc</keyword>
<comment type="catalytic activity">
    <reaction evidence="1">
        <text>tRNA(Cys) + L-cysteine + ATP = L-cysteinyl-tRNA(Cys) + AMP + diphosphate</text>
        <dbReference type="Rhea" id="RHEA:17773"/>
        <dbReference type="Rhea" id="RHEA-COMP:9661"/>
        <dbReference type="Rhea" id="RHEA-COMP:9679"/>
        <dbReference type="ChEBI" id="CHEBI:30616"/>
        <dbReference type="ChEBI" id="CHEBI:33019"/>
        <dbReference type="ChEBI" id="CHEBI:35235"/>
        <dbReference type="ChEBI" id="CHEBI:78442"/>
        <dbReference type="ChEBI" id="CHEBI:78517"/>
        <dbReference type="ChEBI" id="CHEBI:456215"/>
        <dbReference type="EC" id="6.1.1.16"/>
    </reaction>
</comment>
<comment type="cofactor">
    <cofactor evidence="1">
        <name>Zn(2+)</name>
        <dbReference type="ChEBI" id="CHEBI:29105"/>
    </cofactor>
    <text evidence="1">Binds 1 zinc ion per subunit.</text>
</comment>
<comment type="subunit">
    <text evidence="1">Monomer.</text>
</comment>
<comment type="subcellular location">
    <subcellularLocation>
        <location evidence="1">Cytoplasm</location>
    </subcellularLocation>
</comment>
<comment type="similarity">
    <text evidence="1">Belongs to the class-I aminoacyl-tRNA synthetase family.</text>
</comment>
<proteinExistence type="inferred from homology"/>
<name>SYC_NITV4</name>